<organism>
    <name type="scientific">Staphylococcus aureus (strain Mu50 / ATCC 700699)</name>
    <dbReference type="NCBI Taxonomy" id="158878"/>
    <lineage>
        <taxon>Bacteria</taxon>
        <taxon>Bacillati</taxon>
        <taxon>Bacillota</taxon>
        <taxon>Bacilli</taxon>
        <taxon>Bacillales</taxon>
        <taxon>Staphylococcaceae</taxon>
        <taxon>Staphylococcus</taxon>
    </lineage>
</organism>
<protein>
    <recommendedName>
        <fullName evidence="1">Inosine-5'-monophosphate dehydrogenase</fullName>
        <shortName evidence="1">IMP dehydrogenase</shortName>
        <shortName evidence="1">IMPD</shortName>
        <shortName evidence="1">IMPDH</shortName>
        <ecNumber evidence="1">1.1.1.205</ecNumber>
    </recommendedName>
</protein>
<reference key="1">
    <citation type="journal article" date="2001" name="Lancet">
        <title>Whole genome sequencing of meticillin-resistant Staphylococcus aureus.</title>
        <authorList>
            <person name="Kuroda M."/>
            <person name="Ohta T."/>
            <person name="Uchiyama I."/>
            <person name="Baba T."/>
            <person name="Yuzawa H."/>
            <person name="Kobayashi I."/>
            <person name="Cui L."/>
            <person name="Oguchi A."/>
            <person name="Aoki K."/>
            <person name="Nagai Y."/>
            <person name="Lian J.-Q."/>
            <person name="Ito T."/>
            <person name="Kanamori M."/>
            <person name="Matsumaru H."/>
            <person name="Maruyama A."/>
            <person name="Murakami H."/>
            <person name="Hosoyama A."/>
            <person name="Mizutani-Ui Y."/>
            <person name="Takahashi N.K."/>
            <person name="Sawano T."/>
            <person name="Inoue R."/>
            <person name="Kaito C."/>
            <person name="Sekimizu K."/>
            <person name="Hirakawa H."/>
            <person name="Kuhara S."/>
            <person name="Goto S."/>
            <person name="Yabuzaki J."/>
            <person name="Kanehisa M."/>
            <person name="Yamashita A."/>
            <person name="Oshima K."/>
            <person name="Furuya K."/>
            <person name="Yoshino C."/>
            <person name="Shiba T."/>
            <person name="Hattori M."/>
            <person name="Ogasawara N."/>
            <person name="Hayashi H."/>
            <person name="Hiramatsu K."/>
        </authorList>
    </citation>
    <scope>NUCLEOTIDE SEQUENCE [LARGE SCALE GENOMIC DNA]</scope>
    <source>
        <strain>Mu50 / ATCC 700699</strain>
    </source>
</reference>
<dbReference type="EC" id="1.1.1.205" evidence="1"/>
<dbReference type="EMBL" id="BA000017">
    <property type="protein sequence ID" value="BAB56552.1"/>
    <property type="molecule type" value="Genomic_DNA"/>
</dbReference>
<dbReference type="RefSeq" id="WP_000264071.1">
    <property type="nucleotide sequence ID" value="NC_002758.2"/>
</dbReference>
<dbReference type="SMR" id="P65169"/>
<dbReference type="GeneID" id="66838696"/>
<dbReference type="KEGG" id="sav:SAV0390"/>
<dbReference type="HOGENOM" id="CLU_022552_1_0_9"/>
<dbReference type="PhylomeDB" id="P65169"/>
<dbReference type="UniPathway" id="UPA00601">
    <property type="reaction ID" value="UER00295"/>
</dbReference>
<dbReference type="Proteomes" id="UP000002481">
    <property type="component" value="Chromosome"/>
</dbReference>
<dbReference type="GO" id="GO:0003938">
    <property type="term" value="F:IMP dehydrogenase activity"/>
    <property type="evidence" value="ECO:0007669"/>
    <property type="project" value="UniProtKB-UniRule"/>
</dbReference>
<dbReference type="GO" id="GO:0046872">
    <property type="term" value="F:metal ion binding"/>
    <property type="evidence" value="ECO:0007669"/>
    <property type="project" value="UniProtKB-UniRule"/>
</dbReference>
<dbReference type="GO" id="GO:0000166">
    <property type="term" value="F:nucleotide binding"/>
    <property type="evidence" value="ECO:0007669"/>
    <property type="project" value="UniProtKB-UniRule"/>
</dbReference>
<dbReference type="GO" id="GO:0006177">
    <property type="term" value="P:GMP biosynthetic process"/>
    <property type="evidence" value="ECO:0007669"/>
    <property type="project" value="UniProtKB-UniRule"/>
</dbReference>
<dbReference type="GO" id="GO:0006183">
    <property type="term" value="P:GTP biosynthetic process"/>
    <property type="evidence" value="ECO:0007669"/>
    <property type="project" value="TreeGrafter"/>
</dbReference>
<dbReference type="CDD" id="cd04601">
    <property type="entry name" value="CBS_pair_IMPDH"/>
    <property type="match status" value="1"/>
</dbReference>
<dbReference type="CDD" id="cd00381">
    <property type="entry name" value="IMPDH"/>
    <property type="match status" value="1"/>
</dbReference>
<dbReference type="FunFam" id="3.20.20.70:FF:000003">
    <property type="entry name" value="GMP reductase"/>
    <property type="match status" value="1"/>
</dbReference>
<dbReference type="Gene3D" id="3.20.20.70">
    <property type="entry name" value="Aldolase class I"/>
    <property type="match status" value="1"/>
</dbReference>
<dbReference type="HAMAP" id="MF_01964">
    <property type="entry name" value="IMPDH"/>
    <property type="match status" value="1"/>
</dbReference>
<dbReference type="InterPro" id="IPR013785">
    <property type="entry name" value="Aldolase_TIM"/>
</dbReference>
<dbReference type="InterPro" id="IPR000644">
    <property type="entry name" value="CBS_dom"/>
</dbReference>
<dbReference type="InterPro" id="IPR046342">
    <property type="entry name" value="CBS_dom_sf"/>
</dbReference>
<dbReference type="InterPro" id="IPR005990">
    <property type="entry name" value="IMP_DH"/>
</dbReference>
<dbReference type="InterPro" id="IPR015875">
    <property type="entry name" value="IMP_DH/GMP_Rdtase_CS"/>
</dbReference>
<dbReference type="InterPro" id="IPR001093">
    <property type="entry name" value="IMP_DH_GMPRt"/>
</dbReference>
<dbReference type="NCBIfam" id="TIGR01302">
    <property type="entry name" value="IMP_dehydrog"/>
    <property type="match status" value="1"/>
</dbReference>
<dbReference type="PANTHER" id="PTHR11911:SF111">
    <property type="entry name" value="INOSINE-5'-MONOPHOSPHATE DEHYDROGENASE"/>
    <property type="match status" value="1"/>
</dbReference>
<dbReference type="PANTHER" id="PTHR11911">
    <property type="entry name" value="INOSINE-5-MONOPHOSPHATE DEHYDROGENASE RELATED"/>
    <property type="match status" value="1"/>
</dbReference>
<dbReference type="Pfam" id="PF00571">
    <property type="entry name" value="CBS"/>
    <property type="match status" value="2"/>
</dbReference>
<dbReference type="Pfam" id="PF00478">
    <property type="entry name" value="IMPDH"/>
    <property type="match status" value="1"/>
</dbReference>
<dbReference type="PIRSF" id="PIRSF000130">
    <property type="entry name" value="IMPDH"/>
    <property type="match status" value="1"/>
</dbReference>
<dbReference type="SMART" id="SM00116">
    <property type="entry name" value="CBS"/>
    <property type="match status" value="2"/>
</dbReference>
<dbReference type="SMART" id="SM01240">
    <property type="entry name" value="IMPDH"/>
    <property type="match status" value="1"/>
</dbReference>
<dbReference type="SUPFAM" id="SSF54631">
    <property type="entry name" value="CBS-domain pair"/>
    <property type="match status" value="1"/>
</dbReference>
<dbReference type="SUPFAM" id="SSF51412">
    <property type="entry name" value="Inosine monophosphate dehydrogenase (IMPDH)"/>
    <property type="match status" value="1"/>
</dbReference>
<dbReference type="PROSITE" id="PS51371">
    <property type="entry name" value="CBS"/>
    <property type="match status" value="2"/>
</dbReference>
<dbReference type="PROSITE" id="PS00487">
    <property type="entry name" value="IMP_DH_GMP_RED"/>
    <property type="match status" value="1"/>
</dbReference>
<proteinExistence type="inferred from homology"/>
<feature type="chain" id="PRO_0000093707" description="Inosine-5'-monophosphate dehydrogenase">
    <location>
        <begin position="1"/>
        <end position="488"/>
    </location>
</feature>
<feature type="domain" description="CBS 1" evidence="1">
    <location>
        <begin position="95"/>
        <end position="153"/>
    </location>
</feature>
<feature type="domain" description="CBS 2" evidence="1">
    <location>
        <begin position="157"/>
        <end position="216"/>
    </location>
</feature>
<feature type="region of interest" description="Disordered" evidence="2">
    <location>
        <begin position="468"/>
        <end position="488"/>
    </location>
</feature>
<feature type="compositionally biased region" description="Polar residues" evidence="2">
    <location>
        <begin position="475"/>
        <end position="488"/>
    </location>
</feature>
<feature type="active site" description="Thioimidate intermediate" evidence="1">
    <location>
        <position position="307"/>
    </location>
</feature>
<feature type="active site" description="Proton acceptor" evidence="1">
    <location>
        <position position="403"/>
    </location>
</feature>
<feature type="binding site" evidence="1">
    <location>
        <position position="250"/>
    </location>
    <ligand>
        <name>NAD(+)</name>
        <dbReference type="ChEBI" id="CHEBI:57540"/>
    </ligand>
</feature>
<feature type="binding site" evidence="1">
    <location>
        <begin position="300"/>
        <end position="302"/>
    </location>
    <ligand>
        <name>NAD(+)</name>
        <dbReference type="ChEBI" id="CHEBI:57540"/>
    </ligand>
</feature>
<feature type="binding site" description="in other chain" evidence="1">
    <location>
        <position position="302"/>
    </location>
    <ligand>
        <name>K(+)</name>
        <dbReference type="ChEBI" id="CHEBI:29103"/>
        <note>ligand shared between two tetrameric partners</note>
    </ligand>
</feature>
<feature type="binding site" description="in other chain" evidence="1">
    <location>
        <position position="304"/>
    </location>
    <ligand>
        <name>K(+)</name>
        <dbReference type="ChEBI" id="CHEBI:29103"/>
        <note>ligand shared between two tetrameric partners</note>
    </ligand>
</feature>
<feature type="binding site" evidence="1">
    <location>
        <position position="305"/>
    </location>
    <ligand>
        <name>IMP</name>
        <dbReference type="ChEBI" id="CHEBI:58053"/>
    </ligand>
</feature>
<feature type="binding site" description="in other chain" evidence="1">
    <location>
        <position position="307"/>
    </location>
    <ligand>
        <name>K(+)</name>
        <dbReference type="ChEBI" id="CHEBI:29103"/>
        <note>ligand shared between two tetrameric partners</note>
    </ligand>
</feature>
<feature type="binding site" evidence="1">
    <location>
        <begin position="340"/>
        <end position="342"/>
    </location>
    <ligand>
        <name>IMP</name>
        <dbReference type="ChEBI" id="CHEBI:58053"/>
    </ligand>
</feature>
<feature type="binding site" evidence="1">
    <location>
        <begin position="363"/>
        <end position="364"/>
    </location>
    <ligand>
        <name>IMP</name>
        <dbReference type="ChEBI" id="CHEBI:58053"/>
    </ligand>
</feature>
<feature type="binding site" evidence="1">
    <location>
        <begin position="387"/>
        <end position="391"/>
    </location>
    <ligand>
        <name>IMP</name>
        <dbReference type="ChEBI" id="CHEBI:58053"/>
    </ligand>
</feature>
<feature type="binding site" evidence="1">
    <location>
        <position position="417"/>
    </location>
    <ligand>
        <name>IMP</name>
        <dbReference type="ChEBI" id="CHEBI:58053"/>
    </ligand>
</feature>
<feature type="binding site" evidence="1">
    <location>
        <position position="471"/>
    </location>
    <ligand>
        <name>K(+)</name>
        <dbReference type="ChEBI" id="CHEBI:29103"/>
        <note>ligand shared between two tetrameric partners</note>
    </ligand>
</feature>
<feature type="binding site" evidence="1">
    <location>
        <position position="472"/>
    </location>
    <ligand>
        <name>K(+)</name>
        <dbReference type="ChEBI" id="CHEBI:29103"/>
        <note>ligand shared between two tetrameric partners</note>
    </ligand>
</feature>
<feature type="binding site" evidence="1">
    <location>
        <position position="473"/>
    </location>
    <ligand>
        <name>K(+)</name>
        <dbReference type="ChEBI" id="CHEBI:29103"/>
        <note>ligand shared between two tetrameric partners</note>
    </ligand>
</feature>
<gene>
    <name evidence="1" type="primary">guaB</name>
    <name type="ordered locus">SAV0390</name>
</gene>
<evidence type="ECO:0000255" key="1">
    <source>
        <dbReference type="HAMAP-Rule" id="MF_01964"/>
    </source>
</evidence>
<evidence type="ECO:0000256" key="2">
    <source>
        <dbReference type="SAM" id="MobiDB-lite"/>
    </source>
</evidence>
<name>IMDH_STAAM</name>
<sequence>MWESKFAKESLTFDDVLLIPAQSDILPKDVDLSVQLSDKVKLNIPVISAGMDTVTESKMAIAMARQGGLGVIHKNMGVEEQADEVQKVKRSENGVISNPFFLTPEESVYEAEALMGKYRISGVPIVDNKEDRNLVGILTNRDLRFIEDFSIKIVDVMTQENLITAPVNTTLEEAEKILQKHKIEKLPLVKDGRLEGLITIKDIEKVIEFPNAAKDEHGRLLVAAAIGISKDTDIRAQKLVEAGVDVLVIDTAHGHSKGVIDQVKHIKKTYPEITLVAGNVATAEATKDLFEAGADIVKVGIGPGSICTTRVVAGVGVPQITAIYDCATEARKHGKAIIADGGIKFSGDIIKALAAGGHAVMLGSLLAGTEESPGATEIFQGRQYKVYRGMGSLGAMEKGSNDRYFQEDKAPKKFVPEGIEGRTAYKGALQDTIYQLMGGVRAGMGYTGSHDLRELREEAQFTRMGPAGLAESHPHNIQITKESPNYSF</sequence>
<keyword id="KW-0129">CBS domain</keyword>
<keyword id="KW-0332">GMP biosynthesis</keyword>
<keyword id="KW-0479">Metal-binding</keyword>
<keyword id="KW-0520">NAD</keyword>
<keyword id="KW-0560">Oxidoreductase</keyword>
<keyword id="KW-0630">Potassium</keyword>
<keyword id="KW-0658">Purine biosynthesis</keyword>
<keyword id="KW-0677">Repeat</keyword>
<comment type="function">
    <text evidence="1">Catalyzes the conversion of inosine 5'-phosphate (IMP) to xanthosine 5'-phosphate (XMP), the first committed and rate-limiting step in the de novo synthesis of guanine nucleotides, and therefore plays an important role in the regulation of cell growth.</text>
</comment>
<comment type="catalytic activity">
    <reaction evidence="1">
        <text>IMP + NAD(+) + H2O = XMP + NADH + H(+)</text>
        <dbReference type="Rhea" id="RHEA:11708"/>
        <dbReference type="ChEBI" id="CHEBI:15377"/>
        <dbReference type="ChEBI" id="CHEBI:15378"/>
        <dbReference type="ChEBI" id="CHEBI:57464"/>
        <dbReference type="ChEBI" id="CHEBI:57540"/>
        <dbReference type="ChEBI" id="CHEBI:57945"/>
        <dbReference type="ChEBI" id="CHEBI:58053"/>
        <dbReference type="EC" id="1.1.1.205"/>
    </reaction>
</comment>
<comment type="cofactor">
    <cofactor evidence="1">
        <name>K(+)</name>
        <dbReference type="ChEBI" id="CHEBI:29103"/>
    </cofactor>
</comment>
<comment type="activity regulation">
    <text evidence="1">Mycophenolic acid (MPA) is a non-competitive inhibitor that prevents formation of the closed enzyme conformation by binding to the same site as the amobile flap. In contrast, mizoribine monophosphate (MZP) is a competitive inhibitor that induces the closed conformation. MPA is a potent inhibitor of mammalian IMPDHs but a poor inhibitor of the bacterial enzymes. MZP is a more potent inhibitor of bacterial IMPDH.</text>
</comment>
<comment type="pathway">
    <text evidence="1">Purine metabolism; XMP biosynthesis via de novo pathway; XMP from IMP: step 1/1.</text>
</comment>
<comment type="subunit">
    <text evidence="1">Homotetramer.</text>
</comment>
<comment type="similarity">
    <text evidence="1">Belongs to the IMPDH/GMPR family.</text>
</comment>
<accession>P65169</accession>
<accession>Q99WI9</accession>